<gene>
    <name type="primary">nifW</name>
    <name type="ordered locus">all1433</name>
</gene>
<organism>
    <name type="scientific">Nostoc sp. (strain PCC 7120 / SAG 25.82 / UTEX 2576)</name>
    <dbReference type="NCBI Taxonomy" id="103690"/>
    <lineage>
        <taxon>Bacteria</taxon>
        <taxon>Bacillati</taxon>
        <taxon>Cyanobacteriota</taxon>
        <taxon>Cyanophyceae</taxon>
        <taxon>Nostocales</taxon>
        <taxon>Nostocaceae</taxon>
        <taxon>Nostoc</taxon>
    </lineage>
</organism>
<evidence type="ECO:0000250" key="1"/>
<evidence type="ECO:0000305" key="2"/>
<keyword id="KW-0535">Nitrogen fixation</keyword>
<keyword id="KW-1185">Reference proteome</keyword>
<comment type="function">
    <text evidence="1">May protect the nitrogenase Fe-Mo protein from oxidative damage.</text>
</comment>
<comment type="subunit">
    <text evidence="1">Homotrimer; associates with NifD.</text>
</comment>
<comment type="similarity">
    <text evidence="2">Belongs to the NifW family.</text>
</comment>
<feature type="chain" id="PRO_0000219523" description="Nitrogenase-stabilizing/protective protein NifW">
    <location>
        <begin position="1"/>
        <end position="105"/>
    </location>
</feature>
<accession>Q44149</accession>
<proteinExistence type="inferred from homology"/>
<reference key="1">
    <citation type="submission" date="1996-01" db="EMBL/GenBank/DDBJ databases">
        <authorList>
            <person name="Buikema W.J."/>
            <person name="Scappino L.A."/>
            <person name="Haselkorn R."/>
        </authorList>
    </citation>
    <scope>NUCLEOTIDE SEQUENCE [GENOMIC DNA]</scope>
</reference>
<reference key="2">
    <citation type="journal article" date="2001" name="DNA Res.">
        <title>Complete genomic sequence of the filamentous nitrogen-fixing cyanobacterium Anabaena sp. strain PCC 7120.</title>
        <authorList>
            <person name="Kaneko T."/>
            <person name="Nakamura Y."/>
            <person name="Wolk C.P."/>
            <person name="Kuritz T."/>
            <person name="Sasamoto S."/>
            <person name="Watanabe A."/>
            <person name="Iriguchi M."/>
            <person name="Ishikawa A."/>
            <person name="Kawashima K."/>
            <person name="Kimura T."/>
            <person name="Kishida Y."/>
            <person name="Kohara M."/>
            <person name="Matsumoto M."/>
            <person name="Matsuno A."/>
            <person name="Muraki A."/>
            <person name="Nakazaki N."/>
            <person name="Shimpo S."/>
            <person name="Sugimoto M."/>
            <person name="Takazawa M."/>
            <person name="Yamada M."/>
            <person name="Yasuda M."/>
            <person name="Tabata S."/>
        </authorList>
    </citation>
    <scope>NUCLEOTIDE SEQUENCE [LARGE SCALE GENOMIC DNA]</scope>
    <source>
        <strain>PCC 7120 / SAG 25.82 / UTEX 2576</strain>
    </source>
</reference>
<name>NIFW_NOSS1</name>
<sequence>MTKSLEEFKKLVDAEEYFKFFELDYDAKIVNVNRLHILKKFSQLISEIDTNYPDISAEEKLNQYSLALQSAYQVFLGSSPQEQKLFKVFKDKPKNVITLTELSSD</sequence>
<protein>
    <recommendedName>
        <fullName>Nitrogenase-stabilizing/protective protein NifW</fullName>
    </recommendedName>
</protein>
<dbReference type="EMBL" id="U47055">
    <property type="protein sequence ID" value="AAA87952.1"/>
    <property type="molecule type" value="Genomic_DNA"/>
</dbReference>
<dbReference type="EMBL" id="BA000019">
    <property type="protein sequence ID" value="BAB73390.1"/>
    <property type="molecule type" value="Genomic_DNA"/>
</dbReference>
<dbReference type="PIR" id="AF1985">
    <property type="entry name" value="AF1985"/>
</dbReference>
<dbReference type="RefSeq" id="WP_010995605.1">
    <property type="nucleotide sequence ID" value="NZ_RSCN01000040.1"/>
</dbReference>
<dbReference type="SMR" id="Q44149"/>
<dbReference type="STRING" id="103690.gene:10493448"/>
<dbReference type="GeneID" id="58726740"/>
<dbReference type="KEGG" id="ana:all1433"/>
<dbReference type="eggNOG" id="ENOG50330W8">
    <property type="taxonomic scope" value="Bacteria"/>
</dbReference>
<dbReference type="OrthoDB" id="9811868at2"/>
<dbReference type="Proteomes" id="UP000002483">
    <property type="component" value="Chromosome"/>
</dbReference>
<dbReference type="GO" id="GO:0009399">
    <property type="term" value="P:nitrogen fixation"/>
    <property type="evidence" value="ECO:0007669"/>
    <property type="project" value="UniProtKB-UniRule"/>
</dbReference>
<dbReference type="HAMAP" id="MF_00529">
    <property type="entry name" value="NifW"/>
    <property type="match status" value="1"/>
</dbReference>
<dbReference type="InterPro" id="IPR004893">
    <property type="entry name" value="NifW"/>
</dbReference>
<dbReference type="NCBIfam" id="NF010702">
    <property type="entry name" value="PRK14102.1"/>
    <property type="match status" value="1"/>
</dbReference>
<dbReference type="Pfam" id="PF03206">
    <property type="entry name" value="NifW"/>
    <property type="match status" value="1"/>
</dbReference>
<dbReference type="PIRSF" id="PIRSF005790">
    <property type="entry name" value="NifW"/>
    <property type="match status" value="1"/>
</dbReference>